<accession>Q5XVA8</accession>
<accession>Q5XVA9</accession>
<accession>Q9SMU3</accession>
<keyword id="KW-0025">Alternative splicing</keyword>
<keyword id="KW-1185">Reference proteome</keyword>
<protein>
    <recommendedName>
        <fullName>Uncharacterized protein At3g49055</fullName>
    </recommendedName>
</protein>
<sequence length="480" mass="55492">MDVKDTGINRSDTPISDQDHDFRQWNHSSLDSNFLSLRSQIFEASYRRTDLIRVNHELFHERDALRRRNSELEAGILEEVMIREEMKRDLEVSKETVSELEGEAKEKTKLLSDIADYVRSMEDRLSKLIRCLNEENVPEEERGRKLETKEYNSKSILELVKEVVTKLETFQESTKKKKMELSRSVEFLEEENRDINVLLRAALFEKQTAEKQLKEMNDQKGLALLQIAGRGLQRIGFGFGLGESVEESSETGNIANEEEENGVVIAIEKTMKKLRQEVSQLKISLEESRLEEVGLRKVTEEQAQKLAENTVYINKLQNQEKFLAQNVEELVKAIREAESEVSRWREACELEVEAGQREVEVRDQLIAVLKSEVEKLRSALARSEGKLKLKEELAKAAMVAEEAAEKSLRLAERRIAQLLSRIEHLYRQLEEAESTERRRGKFRYVWCWPMWRFPTAASTAATATGSSSYTSNRALLRYDA</sequence>
<feature type="chain" id="PRO_0000322136" description="Uncharacterized protein At3g49055">
    <location>
        <begin position="1"/>
        <end position="480"/>
    </location>
</feature>
<feature type="region of interest" description="Disordered" evidence="1">
    <location>
        <begin position="1"/>
        <end position="20"/>
    </location>
</feature>
<feature type="splice variant" id="VSP_031879" description="In isoform 2." evidence="2">
    <original>EELVKAIREAESEVSRWREACELEVEAGQ</original>
    <variation>MYFWINSFCLPLYVSQFCHKSLTRERLLY</variation>
    <location>
        <begin position="328"/>
        <end position="356"/>
    </location>
</feature>
<feature type="splice variant" id="VSP_031880" description="In isoform 2." evidence="2">
    <location>
        <begin position="357"/>
        <end position="480"/>
    </location>
</feature>
<name>Y3905_ARATH</name>
<gene>
    <name type="ordered locus">At3g49055</name>
    <name type="ORF">T2J13.1</name>
</gene>
<proteinExistence type="evidence at transcript level"/>
<reference key="1">
    <citation type="journal article" date="2000" name="Nature">
        <title>Sequence and analysis of chromosome 3 of the plant Arabidopsis thaliana.</title>
        <authorList>
            <person name="Salanoubat M."/>
            <person name="Lemcke K."/>
            <person name="Rieger M."/>
            <person name="Ansorge W."/>
            <person name="Unseld M."/>
            <person name="Fartmann B."/>
            <person name="Valle G."/>
            <person name="Bloecker H."/>
            <person name="Perez-Alonso M."/>
            <person name="Obermaier B."/>
            <person name="Delseny M."/>
            <person name="Boutry M."/>
            <person name="Grivell L.A."/>
            <person name="Mache R."/>
            <person name="Puigdomenech P."/>
            <person name="De Simone V."/>
            <person name="Choisne N."/>
            <person name="Artiguenave F."/>
            <person name="Robert C."/>
            <person name="Brottier P."/>
            <person name="Wincker P."/>
            <person name="Cattolico L."/>
            <person name="Weissenbach J."/>
            <person name="Saurin W."/>
            <person name="Quetier F."/>
            <person name="Schaefer M."/>
            <person name="Mueller-Auer S."/>
            <person name="Gabel C."/>
            <person name="Fuchs M."/>
            <person name="Benes V."/>
            <person name="Wurmbach E."/>
            <person name="Drzonek H."/>
            <person name="Erfle H."/>
            <person name="Jordan N."/>
            <person name="Bangert S."/>
            <person name="Wiedelmann R."/>
            <person name="Kranz H."/>
            <person name="Voss H."/>
            <person name="Holland R."/>
            <person name="Brandt P."/>
            <person name="Nyakatura G."/>
            <person name="Vezzi A."/>
            <person name="D'Angelo M."/>
            <person name="Pallavicini A."/>
            <person name="Toppo S."/>
            <person name="Simionati B."/>
            <person name="Conrad A."/>
            <person name="Hornischer K."/>
            <person name="Kauer G."/>
            <person name="Loehnert T.-H."/>
            <person name="Nordsiek G."/>
            <person name="Reichelt J."/>
            <person name="Scharfe M."/>
            <person name="Schoen O."/>
            <person name="Bargues M."/>
            <person name="Terol J."/>
            <person name="Climent J."/>
            <person name="Navarro P."/>
            <person name="Collado C."/>
            <person name="Perez-Perez A."/>
            <person name="Ottenwaelder B."/>
            <person name="Duchemin D."/>
            <person name="Cooke R."/>
            <person name="Laudie M."/>
            <person name="Berger-Llauro C."/>
            <person name="Purnelle B."/>
            <person name="Masuy D."/>
            <person name="de Haan M."/>
            <person name="Maarse A.C."/>
            <person name="Alcaraz J.-P."/>
            <person name="Cottet A."/>
            <person name="Casacuberta E."/>
            <person name="Monfort A."/>
            <person name="Argiriou A."/>
            <person name="Flores M."/>
            <person name="Liguori R."/>
            <person name="Vitale D."/>
            <person name="Mannhaupt G."/>
            <person name="Haase D."/>
            <person name="Schoof H."/>
            <person name="Rudd S."/>
            <person name="Zaccaria P."/>
            <person name="Mewes H.-W."/>
            <person name="Mayer K.F.X."/>
            <person name="Kaul S."/>
            <person name="Town C.D."/>
            <person name="Koo H.L."/>
            <person name="Tallon L.J."/>
            <person name="Jenkins J."/>
            <person name="Rooney T."/>
            <person name="Rizzo M."/>
            <person name="Walts A."/>
            <person name="Utterback T."/>
            <person name="Fujii C.Y."/>
            <person name="Shea T.P."/>
            <person name="Creasy T.H."/>
            <person name="Haas B."/>
            <person name="Maiti R."/>
            <person name="Wu D."/>
            <person name="Peterson J."/>
            <person name="Van Aken S."/>
            <person name="Pai G."/>
            <person name="Militscher J."/>
            <person name="Sellers P."/>
            <person name="Gill J.E."/>
            <person name="Feldblyum T.V."/>
            <person name="Preuss D."/>
            <person name="Lin X."/>
            <person name="Nierman W.C."/>
            <person name="Salzberg S.L."/>
            <person name="White O."/>
            <person name="Venter J.C."/>
            <person name="Fraser C.M."/>
            <person name="Kaneko T."/>
            <person name="Nakamura Y."/>
            <person name="Sato S."/>
            <person name="Kato T."/>
            <person name="Asamizu E."/>
            <person name="Sasamoto S."/>
            <person name="Kimura T."/>
            <person name="Idesawa K."/>
            <person name="Kawashima K."/>
            <person name="Kishida Y."/>
            <person name="Kiyokawa C."/>
            <person name="Kohara M."/>
            <person name="Matsumoto M."/>
            <person name="Matsuno A."/>
            <person name="Muraki A."/>
            <person name="Nakayama S."/>
            <person name="Nakazaki N."/>
            <person name="Shinpo S."/>
            <person name="Takeuchi C."/>
            <person name="Wada T."/>
            <person name="Watanabe A."/>
            <person name="Yamada M."/>
            <person name="Yasuda M."/>
            <person name="Tabata S."/>
        </authorList>
    </citation>
    <scope>NUCLEOTIDE SEQUENCE [LARGE SCALE GENOMIC DNA]</scope>
    <source>
        <strain>cv. Columbia</strain>
    </source>
</reference>
<reference key="2">
    <citation type="journal article" date="2017" name="Plant J.">
        <title>Araport11: a complete reannotation of the Arabidopsis thaliana reference genome.</title>
        <authorList>
            <person name="Cheng C.Y."/>
            <person name="Krishnakumar V."/>
            <person name="Chan A.P."/>
            <person name="Thibaud-Nissen F."/>
            <person name="Schobel S."/>
            <person name="Town C.D."/>
        </authorList>
    </citation>
    <scope>GENOME REANNOTATION</scope>
    <source>
        <strain>cv. Columbia</strain>
    </source>
</reference>
<reference key="3">
    <citation type="submission" date="2005-02" db="EMBL/GenBank/DDBJ databases">
        <authorList>
            <person name="Underwood B.A."/>
            <person name="Xiao Y.-L."/>
            <person name="Moskal W.A. Jr."/>
            <person name="Monaghan E.L."/>
            <person name="Wang W."/>
            <person name="Redman J.C."/>
            <person name="Wu H.C."/>
            <person name="Utterback T."/>
            <person name="Town C.D."/>
        </authorList>
    </citation>
    <scope>NUCLEOTIDE SEQUENCE [LARGE SCALE MRNA] (ISOFORMS 1 AND 2)</scope>
    <source>
        <strain>cv. Columbia</strain>
    </source>
</reference>
<comment type="alternative products">
    <event type="alternative splicing"/>
    <isoform>
        <id>Q5XVA8-1</id>
        <name>1</name>
        <sequence type="displayed"/>
    </isoform>
    <isoform>
        <id>Q5XVA8-2</id>
        <name>2</name>
        <sequence type="described" ref="VSP_031879 VSP_031880"/>
    </isoform>
</comment>
<comment type="miscellaneous">
    <molecule>Isoform 2</molecule>
    <text evidence="3">May be due to intron retention.</text>
</comment>
<comment type="sequence caution" evidence="3">
    <conflict type="erroneous gene model prediction">
        <sequence resource="EMBL-CDS" id="CAB62004"/>
    </conflict>
    <text>The predicted gene At3g49060 has been split into 2 genes: At3g49055 and At3g49060.</text>
</comment>
<organism>
    <name type="scientific">Arabidopsis thaliana</name>
    <name type="common">Mouse-ear cress</name>
    <dbReference type="NCBI Taxonomy" id="3702"/>
    <lineage>
        <taxon>Eukaryota</taxon>
        <taxon>Viridiplantae</taxon>
        <taxon>Streptophyta</taxon>
        <taxon>Embryophyta</taxon>
        <taxon>Tracheophyta</taxon>
        <taxon>Spermatophyta</taxon>
        <taxon>Magnoliopsida</taxon>
        <taxon>eudicotyledons</taxon>
        <taxon>Gunneridae</taxon>
        <taxon>Pentapetalae</taxon>
        <taxon>rosids</taxon>
        <taxon>malvids</taxon>
        <taxon>Brassicales</taxon>
        <taxon>Brassicaceae</taxon>
        <taxon>Camelineae</taxon>
        <taxon>Arabidopsis</taxon>
    </lineage>
</organism>
<evidence type="ECO:0000256" key="1">
    <source>
        <dbReference type="SAM" id="MobiDB-lite"/>
    </source>
</evidence>
<evidence type="ECO:0000303" key="2">
    <source ref="3"/>
</evidence>
<evidence type="ECO:0000305" key="3"/>
<dbReference type="EMBL" id="AL132967">
    <property type="protein sequence ID" value="CAB62004.1"/>
    <property type="status" value="ALT_SEQ"/>
    <property type="molecule type" value="Genomic_DNA"/>
</dbReference>
<dbReference type="EMBL" id="CP002686">
    <property type="protein sequence ID" value="AEE78493.1"/>
    <property type="molecule type" value="Genomic_DNA"/>
</dbReference>
<dbReference type="EMBL" id="AY735614">
    <property type="protein sequence ID" value="AAU44484.1"/>
    <property type="molecule type" value="mRNA"/>
</dbReference>
<dbReference type="EMBL" id="AY924788">
    <property type="protein sequence ID" value="AAX23863.1"/>
    <property type="molecule type" value="mRNA"/>
</dbReference>
<dbReference type="EMBL" id="AY735613">
    <property type="protein sequence ID" value="AAU44483.1"/>
    <property type="molecule type" value="mRNA"/>
</dbReference>
<dbReference type="PIR" id="T46124">
    <property type="entry name" value="T46124"/>
</dbReference>
<dbReference type="RefSeq" id="NP_680119.1">
    <molecule id="Q5XVA8-1"/>
    <property type="nucleotide sequence ID" value="NM_148866.2"/>
</dbReference>
<dbReference type="SMR" id="Q5XVA8"/>
<dbReference type="FunCoup" id="Q5XVA8">
    <property type="interactions" value="564"/>
</dbReference>
<dbReference type="STRING" id="3702.Q5XVA8"/>
<dbReference type="iPTMnet" id="Q5XVA8"/>
<dbReference type="PaxDb" id="3702-AT3G49055.1"/>
<dbReference type="ProteomicsDB" id="242889">
    <molecule id="Q5XVA8-1"/>
</dbReference>
<dbReference type="EnsemblPlants" id="AT3G49055.1">
    <molecule id="Q5XVA8-1"/>
    <property type="protein sequence ID" value="AT3G49055.1"/>
    <property type="gene ID" value="AT3G49055"/>
</dbReference>
<dbReference type="GeneID" id="824067"/>
<dbReference type="Gramene" id="AT3G49055.1">
    <molecule id="Q5XVA8-1"/>
    <property type="protein sequence ID" value="AT3G49055.1"/>
    <property type="gene ID" value="AT3G49055"/>
</dbReference>
<dbReference type="KEGG" id="ath:AT3G49055"/>
<dbReference type="Araport" id="AT3G49055"/>
<dbReference type="TAIR" id="AT3G49055"/>
<dbReference type="eggNOG" id="ENOG502QUP5">
    <property type="taxonomic scope" value="Eukaryota"/>
</dbReference>
<dbReference type="HOGENOM" id="CLU_032437_0_0_1"/>
<dbReference type="InParanoid" id="Q5XVA8"/>
<dbReference type="OMA" id="TRYACWP"/>
<dbReference type="OrthoDB" id="1925974at2759"/>
<dbReference type="PhylomeDB" id="Q5XVA8"/>
<dbReference type="PRO" id="PR:Q5XVA8"/>
<dbReference type="Proteomes" id="UP000006548">
    <property type="component" value="Chromosome 3"/>
</dbReference>
<dbReference type="ExpressionAtlas" id="Q5XVA8">
    <property type="expression patterns" value="baseline and differential"/>
</dbReference>
<dbReference type="InterPro" id="IPR040300">
    <property type="entry name" value="At3g49055-like"/>
</dbReference>
<dbReference type="PANTHER" id="PTHR34937">
    <property type="entry name" value="OS08G0559800 PROTEIN"/>
    <property type="match status" value="1"/>
</dbReference>
<dbReference type="PANTHER" id="PTHR34937:SF2">
    <property type="entry name" value="OS08G0559800 PROTEIN"/>
    <property type="match status" value="1"/>
</dbReference>